<name>CATA3_ARATH</name>
<gene>
    <name type="primary">CAT3</name>
    <name type="ordered locus">At1g20620</name>
    <name type="ORF">F2D10.40</name>
    <name type="ORF">F5M15.5</name>
</gene>
<reference key="1">
    <citation type="journal article" date="1996" name="Mol. Gen. Genet.">
        <title>The circadian clock gates expression of two Arabidopsis catalase genes to distinct and opposite circadian phases.</title>
        <authorList>
            <person name="Zhong H.H."/>
            <person name="McClung C.R."/>
        </authorList>
    </citation>
    <scope>NUCLEOTIDE SEQUENCE [GENOMIC DNA]</scope>
    <source>
        <strain>cv. Columbia</strain>
    </source>
</reference>
<reference key="2">
    <citation type="submission" date="1997-09" db="EMBL/GenBank/DDBJ databases">
        <authorList>
            <person name="Zhong H.H."/>
            <person name="McClung C.R."/>
        </authorList>
    </citation>
    <scope>SEQUENCE REVISION TO 457 AND 492</scope>
</reference>
<reference key="3">
    <citation type="journal article" date="1998" name="Genetics">
        <title>Intron loss and gain during evolution of the catalase gene family in angiosperms.</title>
        <authorList>
            <person name="Frugoli J.A."/>
            <person name="McPeek M.A."/>
            <person name="Thomas T.L."/>
            <person name="McClung C.R."/>
        </authorList>
    </citation>
    <scope>NUCLEOTIDE SEQUENCE [GENOMIC DNA]</scope>
    <source>
        <strain>cv. Columbia</strain>
    </source>
</reference>
<reference key="4">
    <citation type="journal article" date="2000" name="Nature">
        <title>Sequence and analysis of chromosome 1 of the plant Arabidopsis thaliana.</title>
        <authorList>
            <person name="Theologis A."/>
            <person name="Ecker J.R."/>
            <person name="Palm C.J."/>
            <person name="Federspiel N.A."/>
            <person name="Kaul S."/>
            <person name="White O."/>
            <person name="Alonso J."/>
            <person name="Altafi H."/>
            <person name="Araujo R."/>
            <person name="Bowman C.L."/>
            <person name="Brooks S.Y."/>
            <person name="Buehler E."/>
            <person name="Chan A."/>
            <person name="Chao Q."/>
            <person name="Chen H."/>
            <person name="Cheuk R.F."/>
            <person name="Chin C.W."/>
            <person name="Chung M.K."/>
            <person name="Conn L."/>
            <person name="Conway A.B."/>
            <person name="Conway A.R."/>
            <person name="Creasy T.H."/>
            <person name="Dewar K."/>
            <person name="Dunn P."/>
            <person name="Etgu P."/>
            <person name="Feldblyum T.V."/>
            <person name="Feng J.-D."/>
            <person name="Fong B."/>
            <person name="Fujii C.Y."/>
            <person name="Gill J.E."/>
            <person name="Goldsmith A.D."/>
            <person name="Haas B."/>
            <person name="Hansen N.F."/>
            <person name="Hughes B."/>
            <person name="Huizar L."/>
            <person name="Hunter J.L."/>
            <person name="Jenkins J."/>
            <person name="Johnson-Hopson C."/>
            <person name="Khan S."/>
            <person name="Khaykin E."/>
            <person name="Kim C.J."/>
            <person name="Koo H.L."/>
            <person name="Kremenetskaia I."/>
            <person name="Kurtz D.B."/>
            <person name="Kwan A."/>
            <person name="Lam B."/>
            <person name="Langin-Hooper S."/>
            <person name="Lee A."/>
            <person name="Lee J.M."/>
            <person name="Lenz C.A."/>
            <person name="Li J.H."/>
            <person name="Li Y.-P."/>
            <person name="Lin X."/>
            <person name="Liu S.X."/>
            <person name="Liu Z.A."/>
            <person name="Luros J.S."/>
            <person name="Maiti R."/>
            <person name="Marziali A."/>
            <person name="Militscher J."/>
            <person name="Miranda M."/>
            <person name="Nguyen M."/>
            <person name="Nierman W.C."/>
            <person name="Osborne B.I."/>
            <person name="Pai G."/>
            <person name="Peterson J."/>
            <person name="Pham P.K."/>
            <person name="Rizzo M."/>
            <person name="Rooney T."/>
            <person name="Rowley D."/>
            <person name="Sakano H."/>
            <person name="Salzberg S.L."/>
            <person name="Schwartz J.R."/>
            <person name="Shinn P."/>
            <person name="Southwick A.M."/>
            <person name="Sun H."/>
            <person name="Tallon L.J."/>
            <person name="Tambunga G."/>
            <person name="Toriumi M.J."/>
            <person name="Town C.D."/>
            <person name="Utterback T."/>
            <person name="Van Aken S."/>
            <person name="Vaysberg M."/>
            <person name="Vysotskaia V.S."/>
            <person name="Walker M."/>
            <person name="Wu D."/>
            <person name="Yu G."/>
            <person name="Fraser C.M."/>
            <person name="Venter J.C."/>
            <person name="Davis R.W."/>
        </authorList>
    </citation>
    <scope>NUCLEOTIDE SEQUENCE [LARGE SCALE GENOMIC DNA]</scope>
    <source>
        <strain>cv. Columbia</strain>
    </source>
</reference>
<reference key="5">
    <citation type="journal article" date="2017" name="Plant J.">
        <title>Araport11: a complete reannotation of the Arabidopsis thaliana reference genome.</title>
        <authorList>
            <person name="Cheng C.Y."/>
            <person name="Krishnakumar V."/>
            <person name="Chan A.P."/>
            <person name="Thibaud-Nissen F."/>
            <person name="Schobel S."/>
            <person name="Town C.D."/>
        </authorList>
    </citation>
    <scope>GENOME REANNOTATION</scope>
    <source>
        <strain>cv. Columbia</strain>
    </source>
</reference>
<reference key="6">
    <citation type="journal article" date="2003" name="Science">
        <title>Empirical analysis of transcriptional activity in the Arabidopsis genome.</title>
        <authorList>
            <person name="Yamada K."/>
            <person name="Lim J."/>
            <person name="Dale J.M."/>
            <person name="Chen H."/>
            <person name="Shinn P."/>
            <person name="Palm C.J."/>
            <person name="Southwick A.M."/>
            <person name="Wu H.C."/>
            <person name="Kim C.J."/>
            <person name="Nguyen M."/>
            <person name="Pham P.K."/>
            <person name="Cheuk R.F."/>
            <person name="Karlin-Newmann G."/>
            <person name="Liu S.X."/>
            <person name="Lam B."/>
            <person name="Sakano H."/>
            <person name="Wu T."/>
            <person name="Yu G."/>
            <person name="Miranda M."/>
            <person name="Quach H.L."/>
            <person name="Tripp M."/>
            <person name="Chang C.H."/>
            <person name="Lee J.M."/>
            <person name="Toriumi M.J."/>
            <person name="Chan M.M."/>
            <person name="Tang C.C."/>
            <person name="Onodera C.S."/>
            <person name="Deng J.M."/>
            <person name="Akiyama K."/>
            <person name="Ansari Y."/>
            <person name="Arakawa T."/>
            <person name="Banh J."/>
            <person name="Banno F."/>
            <person name="Bowser L."/>
            <person name="Brooks S.Y."/>
            <person name="Carninci P."/>
            <person name="Chao Q."/>
            <person name="Choy N."/>
            <person name="Enju A."/>
            <person name="Goldsmith A.D."/>
            <person name="Gurjal M."/>
            <person name="Hansen N.F."/>
            <person name="Hayashizaki Y."/>
            <person name="Johnson-Hopson C."/>
            <person name="Hsuan V.W."/>
            <person name="Iida K."/>
            <person name="Karnes M."/>
            <person name="Khan S."/>
            <person name="Koesema E."/>
            <person name="Ishida J."/>
            <person name="Jiang P.X."/>
            <person name="Jones T."/>
            <person name="Kawai J."/>
            <person name="Kamiya A."/>
            <person name="Meyers C."/>
            <person name="Nakajima M."/>
            <person name="Narusaka M."/>
            <person name="Seki M."/>
            <person name="Sakurai T."/>
            <person name="Satou M."/>
            <person name="Tamse R."/>
            <person name="Vaysberg M."/>
            <person name="Wallender E.K."/>
            <person name="Wong C."/>
            <person name="Yamamura Y."/>
            <person name="Yuan S."/>
            <person name="Shinozaki K."/>
            <person name="Davis R.W."/>
            <person name="Theologis A."/>
            <person name="Ecker J.R."/>
        </authorList>
    </citation>
    <scope>NUCLEOTIDE SEQUENCE [LARGE SCALE MRNA]</scope>
    <source>
        <strain>cv. Columbia</strain>
    </source>
</reference>
<reference key="7">
    <citation type="submission" date="2002-03" db="EMBL/GenBank/DDBJ databases">
        <title>Full-length cDNA from Arabidopsis thaliana.</title>
        <authorList>
            <person name="Brover V.V."/>
            <person name="Troukhan M.E."/>
            <person name="Alexandrov N.A."/>
            <person name="Lu Y.-P."/>
            <person name="Flavell R.B."/>
            <person name="Feldmann K.A."/>
        </authorList>
    </citation>
    <scope>NUCLEOTIDE SEQUENCE [LARGE SCALE MRNA]</scope>
</reference>
<reference key="8">
    <citation type="journal article" date="2006" name="Proteomics">
        <title>The early responses of Arabidopsis thaliana cells to cadmium exposure explored by protein and metabolite profiling analyses.</title>
        <authorList>
            <person name="Sarry J.-E."/>
            <person name="Kuhn L."/>
            <person name="Ducruix C."/>
            <person name="Lafaye A."/>
            <person name="Junot C."/>
            <person name="Hugouvieux V."/>
            <person name="Jourdain A."/>
            <person name="Bastien O."/>
            <person name="Fievet J.B."/>
            <person name="Vailhen D."/>
            <person name="Amekraz B."/>
            <person name="Moulin C."/>
            <person name="Ezan E."/>
            <person name="Garin J."/>
            <person name="Bourguignon J."/>
        </authorList>
    </citation>
    <scope>INDUCTION BY CADMIUM</scope>
    <source>
        <strain>cv. Columbia</strain>
    </source>
</reference>
<reference key="9">
    <citation type="journal article" date="2007" name="Plant Cell">
        <title>Proteome analysis of Arabidopsis leaf peroxisomes reveals novel targeting peptides, metabolic pathways, and defense mechanisms.</title>
        <authorList>
            <person name="Reumann S."/>
            <person name="Babujee L."/>
            <person name="Ma C."/>
            <person name="Wienkoop S."/>
            <person name="Siemsen T."/>
            <person name="Antonicelli G.E."/>
            <person name="Rasche N."/>
            <person name="Lueder F."/>
            <person name="Weckwerth W."/>
            <person name="Jahn O."/>
        </authorList>
    </citation>
    <scope>IDENTIFICATION BY MASS SPECTROMETRY</scope>
</reference>
<reference key="10">
    <citation type="journal article" date="2009" name="J. Proteomics">
        <title>Phosphoproteomic analysis of nuclei-enriched fractions from Arabidopsis thaliana.</title>
        <authorList>
            <person name="Jones A.M.E."/>
            <person name="MacLean D."/>
            <person name="Studholme D.J."/>
            <person name="Serna-Sanz A."/>
            <person name="Andreasson E."/>
            <person name="Rathjen J.P."/>
            <person name="Peck S.C."/>
        </authorList>
    </citation>
    <scope>IDENTIFICATION BY MASS SPECTROMETRY [LARGE SCALE ANALYSIS]</scope>
    <source>
        <strain>cv. Columbia</strain>
    </source>
</reference>
<reference key="11">
    <citation type="journal article" date="2009" name="Plant Physiol.">
        <title>Large-scale Arabidopsis phosphoproteome profiling reveals novel chloroplast kinase substrates and phosphorylation networks.</title>
        <authorList>
            <person name="Reiland S."/>
            <person name="Messerli G."/>
            <person name="Baerenfaller K."/>
            <person name="Gerrits B."/>
            <person name="Endler A."/>
            <person name="Grossmann J."/>
            <person name="Gruissem W."/>
            <person name="Baginsky S."/>
        </authorList>
    </citation>
    <scope>IDENTIFICATION BY MASS SPECTROMETRY [LARGE SCALE ANALYSIS]</scope>
</reference>
<reference key="12">
    <citation type="journal article" date="2013" name="Plant Physiol.">
        <title>LESION SIMULATING DISEASE1 interacts with catalases to regulate hypersensitive cell death in Arabidopsis.</title>
        <authorList>
            <person name="Li Y."/>
            <person name="Chen L."/>
            <person name="Mu J."/>
            <person name="Zuo J."/>
        </authorList>
    </citation>
    <scope>INTERACTION WITH LSD1</scope>
</reference>
<reference key="13">
    <citation type="journal article" date="2015" name="Plant Cell">
        <title>A chaperone function of NO CATALASE ACTIVITY1 is required to maintain catalase activity and for multiple stress responses in Arabidopsis.</title>
        <authorList>
            <person name="Li J."/>
            <person name="Liu J."/>
            <person name="Wang G."/>
            <person name="Cha J.Y."/>
            <person name="Li G."/>
            <person name="Chen S."/>
            <person name="Li Z."/>
            <person name="Guo J."/>
            <person name="Zhang C."/>
            <person name="Yang Y."/>
            <person name="Kim W.Y."/>
            <person name="Yun D.J."/>
            <person name="Schumaker K.S."/>
            <person name="Chen Z."/>
            <person name="Guo Y."/>
        </authorList>
    </citation>
    <scope>INTERACTION WITH NCA1</scope>
    <scope>SUBCELLULAR LOCATION</scope>
    <scope>SUBUNIT</scope>
</reference>
<dbReference type="EC" id="1.11.1.6"/>
<dbReference type="EMBL" id="U43147">
    <property type="protein sequence ID" value="AAC49807.1"/>
    <property type="molecule type" value="Genomic_DNA"/>
</dbReference>
<dbReference type="EMBL" id="AF021937">
    <property type="protein sequence ID" value="AAC17732.1"/>
    <property type="molecule type" value="Genomic_DNA"/>
</dbReference>
<dbReference type="EMBL" id="AC027665">
    <property type="protein sequence ID" value="AAF79625.1"/>
    <property type="status" value="ALT_SEQ"/>
    <property type="molecule type" value="Genomic_DNA"/>
</dbReference>
<dbReference type="EMBL" id="AC069251">
    <property type="protein sequence ID" value="AAF80611.1"/>
    <property type="status" value="ALT_SEQ"/>
    <property type="molecule type" value="Genomic_DNA"/>
</dbReference>
<dbReference type="EMBL" id="CP002684">
    <property type="protein sequence ID" value="AEE29995.1"/>
    <property type="molecule type" value="Genomic_DNA"/>
</dbReference>
<dbReference type="EMBL" id="AY058104">
    <property type="protein sequence ID" value="AAL24212.1"/>
    <property type="molecule type" value="mRNA"/>
</dbReference>
<dbReference type="EMBL" id="AY056447">
    <property type="protein sequence ID" value="AAL08303.1"/>
    <property type="molecule type" value="mRNA"/>
</dbReference>
<dbReference type="EMBL" id="AY087477">
    <property type="protein sequence ID" value="AAM65021.1"/>
    <property type="molecule type" value="mRNA"/>
</dbReference>
<dbReference type="PIR" id="S71112">
    <property type="entry name" value="S71112"/>
</dbReference>
<dbReference type="RefSeq" id="NP_564120.1">
    <molecule id="Q42547-1"/>
    <property type="nucleotide sequence ID" value="NM_101913.4"/>
</dbReference>
<dbReference type="SMR" id="Q42547"/>
<dbReference type="BioGRID" id="23890">
    <property type="interactions" value="12"/>
</dbReference>
<dbReference type="FunCoup" id="Q42547">
    <property type="interactions" value="2083"/>
</dbReference>
<dbReference type="IntAct" id="Q42547">
    <property type="interactions" value="4"/>
</dbReference>
<dbReference type="STRING" id="3702.Q42547"/>
<dbReference type="PeroxiBase" id="5143">
    <property type="entry name" value="AtKat03"/>
</dbReference>
<dbReference type="iPTMnet" id="Q42547"/>
<dbReference type="PaxDb" id="3702-AT1G20620.1"/>
<dbReference type="ProteomicsDB" id="223911">
    <molecule id="Q42547-1"/>
</dbReference>
<dbReference type="EnsemblPlants" id="AT1G20620.1">
    <molecule id="Q42547-1"/>
    <property type="protein sequence ID" value="AT1G20620.1"/>
    <property type="gene ID" value="AT1G20620"/>
</dbReference>
<dbReference type="GeneID" id="838651"/>
<dbReference type="Gramene" id="AT1G20620.1">
    <molecule id="Q42547-1"/>
    <property type="protein sequence ID" value="AT1G20620.1"/>
    <property type="gene ID" value="AT1G20620"/>
</dbReference>
<dbReference type="KEGG" id="ath:AT1G20620"/>
<dbReference type="Araport" id="AT1G20620"/>
<dbReference type="TAIR" id="AT1G20620">
    <property type="gene designation" value="CAT3"/>
</dbReference>
<dbReference type="eggNOG" id="KOG0047">
    <property type="taxonomic scope" value="Eukaryota"/>
</dbReference>
<dbReference type="InParanoid" id="Q42547"/>
<dbReference type="OrthoDB" id="1022039at2759"/>
<dbReference type="PhylomeDB" id="Q42547"/>
<dbReference type="PRO" id="PR:Q42547"/>
<dbReference type="Proteomes" id="UP000006548">
    <property type="component" value="Chromosome 1"/>
</dbReference>
<dbReference type="ExpressionAtlas" id="Q42547">
    <property type="expression patterns" value="baseline and differential"/>
</dbReference>
<dbReference type="GO" id="GO:0048046">
    <property type="term" value="C:apoplast"/>
    <property type="evidence" value="ECO:0007005"/>
    <property type="project" value="TAIR"/>
</dbReference>
<dbReference type="GO" id="GO:0009507">
    <property type="term" value="C:chloroplast"/>
    <property type="evidence" value="ECO:0007005"/>
    <property type="project" value="TAIR"/>
</dbReference>
<dbReference type="GO" id="GO:0009941">
    <property type="term" value="C:chloroplast envelope"/>
    <property type="evidence" value="ECO:0007005"/>
    <property type="project" value="TAIR"/>
</dbReference>
<dbReference type="GO" id="GO:0009570">
    <property type="term" value="C:chloroplast stroma"/>
    <property type="evidence" value="ECO:0007005"/>
    <property type="project" value="TAIR"/>
</dbReference>
<dbReference type="GO" id="GO:0005829">
    <property type="term" value="C:cytosol"/>
    <property type="evidence" value="ECO:0000314"/>
    <property type="project" value="TAIR"/>
</dbReference>
<dbReference type="GO" id="GO:0022626">
    <property type="term" value="C:cytosolic ribosome"/>
    <property type="evidence" value="ECO:0007005"/>
    <property type="project" value="TAIR"/>
</dbReference>
<dbReference type="GO" id="GO:0005739">
    <property type="term" value="C:mitochondrion"/>
    <property type="evidence" value="ECO:0007005"/>
    <property type="project" value="TAIR"/>
</dbReference>
<dbReference type="GO" id="GO:0005634">
    <property type="term" value="C:nucleus"/>
    <property type="evidence" value="ECO:0007005"/>
    <property type="project" value="TAIR"/>
</dbReference>
<dbReference type="GO" id="GO:0005777">
    <property type="term" value="C:peroxisome"/>
    <property type="evidence" value="ECO:0000314"/>
    <property type="project" value="TAIR"/>
</dbReference>
<dbReference type="GO" id="GO:0009505">
    <property type="term" value="C:plant-type cell wall"/>
    <property type="evidence" value="ECO:0007005"/>
    <property type="project" value="TAIR"/>
</dbReference>
<dbReference type="GO" id="GO:0000325">
    <property type="term" value="C:plant-type vacuole"/>
    <property type="evidence" value="ECO:0007005"/>
    <property type="project" value="TAIR"/>
</dbReference>
<dbReference type="GO" id="GO:0009506">
    <property type="term" value="C:plasmodesma"/>
    <property type="evidence" value="ECO:0007005"/>
    <property type="project" value="TAIR"/>
</dbReference>
<dbReference type="GO" id="GO:0004096">
    <property type="term" value="F:catalase activity"/>
    <property type="evidence" value="ECO:0000250"/>
    <property type="project" value="TAIR"/>
</dbReference>
<dbReference type="GO" id="GO:0050897">
    <property type="term" value="F:cobalt ion binding"/>
    <property type="evidence" value="ECO:0007005"/>
    <property type="project" value="TAIR"/>
</dbReference>
<dbReference type="GO" id="GO:0020037">
    <property type="term" value="F:heme binding"/>
    <property type="evidence" value="ECO:0007669"/>
    <property type="project" value="InterPro"/>
</dbReference>
<dbReference type="GO" id="GO:0003729">
    <property type="term" value="F:mRNA binding"/>
    <property type="evidence" value="ECO:0000314"/>
    <property type="project" value="TAIR"/>
</dbReference>
<dbReference type="GO" id="GO:0035605">
    <property type="term" value="F:peptidyl-cysteine S-nitrosylase activity"/>
    <property type="evidence" value="ECO:0000314"/>
    <property type="project" value="TAIR"/>
</dbReference>
<dbReference type="GO" id="GO:0006995">
    <property type="term" value="P:cellular response to nitrogen starvation"/>
    <property type="evidence" value="ECO:0000270"/>
    <property type="project" value="TAIR"/>
</dbReference>
<dbReference type="GO" id="GO:0016036">
    <property type="term" value="P:cellular response to phosphate starvation"/>
    <property type="evidence" value="ECO:0000270"/>
    <property type="project" value="TAIR"/>
</dbReference>
<dbReference type="GO" id="GO:0009970">
    <property type="term" value="P:cellular response to sulfate starvation"/>
    <property type="evidence" value="ECO:0000270"/>
    <property type="project" value="TAIR"/>
</dbReference>
<dbReference type="GO" id="GO:0042744">
    <property type="term" value="P:hydrogen peroxide catabolic process"/>
    <property type="evidence" value="ECO:0000316"/>
    <property type="project" value="TAIR"/>
</dbReference>
<dbReference type="GO" id="GO:0035606">
    <property type="term" value="P:peptidyl-cysteine S-trans-nitrosylation"/>
    <property type="evidence" value="ECO:0000314"/>
    <property type="project" value="TAIR"/>
</dbReference>
<dbReference type="GO" id="GO:0009409">
    <property type="term" value="P:response to cold"/>
    <property type="evidence" value="ECO:0000270"/>
    <property type="project" value="TAIR"/>
</dbReference>
<dbReference type="GO" id="GO:0009416">
    <property type="term" value="P:response to light stimulus"/>
    <property type="evidence" value="ECO:0000270"/>
    <property type="project" value="TAIR"/>
</dbReference>
<dbReference type="GO" id="GO:0006979">
    <property type="term" value="P:response to oxidative stress"/>
    <property type="evidence" value="ECO:0007669"/>
    <property type="project" value="InterPro"/>
</dbReference>
<dbReference type="CDD" id="cd08154">
    <property type="entry name" value="catalase_clade_1"/>
    <property type="match status" value="1"/>
</dbReference>
<dbReference type="FunFam" id="2.40.180.10:FF:000002">
    <property type="entry name" value="Catalase"/>
    <property type="match status" value="1"/>
</dbReference>
<dbReference type="Gene3D" id="2.40.180.10">
    <property type="entry name" value="Catalase core domain"/>
    <property type="match status" value="1"/>
</dbReference>
<dbReference type="InterPro" id="IPR018028">
    <property type="entry name" value="Catalase"/>
</dbReference>
<dbReference type="InterPro" id="IPR024711">
    <property type="entry name" value="Catalase_clade1/3"/>
</dbReference>
<dbReference type="InterPro" id="IPR011614">
    <property type="entry name" value="Catalase_core"/>
</dbReference>
<dbReference type="InterPro" id="IPR002226">
    <property type="entry name" value="Catalase_haem_BS"/>
</dbReference>
<dbReference type="InterPro" id="IPR010582">
    <property type="entry name" value="Catalase_immune_responsive"/>
</dbReference>
<dbReference type="InterPro" id="IPR020835">
    <property type="entry name" value="Catalase_sf"/>
</dbReference>
<dbReference type="PANTHER" id="PTHR11465">
    <property type="entry name" value="CATALASE"/>
    <property type="match status" value="1"/>
</dbReference>
<dbReference type="PANTHER" id="PTHR11465:SF43">
    <property type="entry name" value="CATALASE-3"/>
    <property type="match status" value="1"/>
</dbReference>
<dbReference type="Pfam" id="PF00199">
    <property type="entry name" value="Catalase"/>
    <property type="match status" value="1"/>
</dbReference>
<dbReference type="Pfam" id="PF06628">
    <property type="entry name" value="Catalase-rel"/>
    <property type="match status" value="1"/>
</dbReference>
<dbReference type="PIRSF" id="PIRSF038928">
    <property type="entry name" value="Catalase_clade1-3"/>
    <property type="match status" value="1"/>
</dbReference>
<dbReference type="PRINTS" id="PR00067">
    <property type="entry name" value="CATALASE"/>
</dbReference>
<dbReference type="SMART" id="SM01060">
    <property type="entry name" value="Catalase"/>
    <property type="match status" value="1"/>
</dbReference>
<dbReference type="SUPFAM" id="SSF56634">
    <property type="entry name" value="Heme-dependent catalase-like"/>
    <property type="match status" value="1"/>
</dbReference>
<dbReference type="PROSITE" id="PS00437">
    <property type="entry name" value="CATALASE_1"/>
    <property type="match status" value="1"/>
</dbReference>
<dbReference type="PROSITE" id="PS51402">
    <property type="entry name" value="CATALASE_3"/>
    <property type="match status" value="1"/>
</dbReference>
<accession>Q42547</accession>
<accession>Q93VY9</accession>
<accession>Q9LDS9</accession>
<protein>
    <recommendedName>
        <fullName>Catalase-3</fullName>
        <ecNumber>1.11.1.6</ecNumber>
    </recommendedName>
</protein>
<feature type="chain" id="PRO_0000084932" description="Catalase-3">
    <location>
        <begin position="1"/>
        <end position="492"/>
    </location>
</feature>
<feature type="active site" evidence="1">
    <location>
        <position position="65"/>
    </location>
</feature>
<feature type="active site" evidence="1">
    <location>
        <position position="138"/>
    </location>
</feature>
<feature type="binding site" description="axial binding residue" evidence="1">
    <location>
        <position position="348"/>
    </location>
    <ligand>
        <name>heme</name>
        <dbReference type="ChEBI" id="CHEBI:30413"/>
    </ligand>
    <ligandPart>
        <name>Fe</name>
        <dbReference type="ChEBI" id="CHEBI:18248"/>
    </ligandPart>
</feature>
<feature type="sequence conflict" description="In Ref. 2; AAC49807 and 3; AAC17732." evidence="5" ref="2 3">
    <original>E</original>
    <variation>G</variation>
    <location>
        <position position="109"/>
    </location>
</feature>
<feature type="sequence conflict" description="In Ref. 2; AAC49807 and 3; AAC17732." evidence="5" ref="2 3">
    <original>P</original>
    <variation>R</variation>
    <location>
        <position position="162"/>
    </location>
</feature>
<feature type="sequence conflict" description="In Ref. 7; AAM65021." evidence="5" ref="7">
    <original>A</original>
    <variation>V</variation>
    <location>
        <position position="260"/>
    </location>
</feature>
<feature type="sequence conflict" description="In Ref. 2; AAC49807 and 3; AAC17732." evidence="5" ref="2 3">
    <original>I</original>
    <variation>T</variation>
    <location>
        <position position="468"/>
    </location>
</feature>
<feature type="sequence conflict" description="In Ref. 2; AAC49807 and 3; AAC17732." evidence="5" ref="2 3">
    <original>SQ</original>
    <variation>LK</variation>
    <location>
        <begin position="472"/>
        <end position="473"/>
    </location>
</feature>
<evidence type="ECO:0000250" key="1"/>
<evidence type="ECO:0000269" key="2">
    <source>
    </source>
</evidence>
<evidence type="ECO:0000269" key="3">
    <source>
    </source>
</evidence>
<evidence type="ECO:0000269" key="4">
    <source>
    </source>
</evidence>
<evidence type="ECO:0000305" key="5"/>
<sequence length="492" mass="56695">MDPYKYRPSSAYNAPFYTTNGGAPVSNNISSLTIGERGPVLLEDYHLIEKVANFTRERIPERVVHARGISAKGFFEVTHDISNLTCADFLRAPGVQTPVIVRFSTVVHERASPETMRDIRGFAVKFYTREGNFDLVGNNTPVFFIRDGIQFPDVVHALKPNPKTNIQEYWRILDYMSHLPESLLTWCWMFDDVGIPQDYRHMEGFGVHTYTLIAKSGKVLFVKFHWKPTCGIKNLTDEEAKVVGGANHSHATKDLHDAIASGNYPEWKLFIQTMDPADEDKFDFDPLDVTKIWPEDILPLQPVGRLVLNRTIDNFFNETEQLAFNPGLVVPGIYYSDDKLLQCRIFAYGDTQRHRLGPNYLQLPVNAPKCAHHNNHHEGFMNFMHRDEEINYYPSKFDPVRCAEKVPTPTNSYTGIRTKCVIKKENNFKQAGDRYRSWAPDRQDRFVKRWVEILSEPRLTHEIRGIWISYWSQADRSLGQKLASRLNVRPSI</sequence>
<comment type="function">
    <text>Occurs in almost all aerobically respiring organisms and serves to protect cells from the toxic effects of hydrogen peroxide.</text>
</comment>
<comment type="catalytic activity">
    <reaction>
        <text>2 H2O2 = O2 + 2 H2O</text>
        <dbReference type="Rhea" id="RHEA:20309"/>
        <dbReference type="ChEBI" id="CHEBI:15377"/>
        <dbReference type="ChEBI" id="CHEBI:15379"/>
        <dbReference type="ChEBI" id="CHEBI:16240"/>
        <dbReference type="EC" id="1.11.1.6"/>
    </reaction>
</comment>
<comment type="cofactor">
    <cofactor>
        <name>heme</name>
        <dbReference type="ChEBI" id="CHEBI:30413"/>
    </cofactor>
</comment>
<comment type="subunit">
    <text evidence="3 4">Homotetramer and heterotetramer (PubMed:25700484). At least six or seven isozymes are produced from a mixture of 3 gene products. Interacts with NCA1 (PubMed:25700484). Interacts with LSD1 (PubMed:23958864).</text>
</comment>
<comment type="interaction">
    <interactant intactId="EBI-1537181">
        <id>Q42547</id>
    </interactant>
    <interactant intactId="EBI-9078764">
        <id>C1KKL7</id>
    </interactant>
    <organismsDiffer>true</organismsDiffer>
    <experiments>4</experiments>
</comment>
<comment type="subcellular location">
    <subcellularLocation>
        <location evidence="4">Peroxisome</location>
    </subcellularLocation>
</comment>
<comment type="alternative products">
    <event type="alternative splicing"/>
    <isoform>
        <id>Q42547-1</id>
        <name>1</name>
        <sequence type="displayed"/>
    </isoform>
    <text>A number of isoforms are produced. According to EST sequences.</text>
</comment>
<comment type="induction">
    <text evidence="2">Induced by cadmium.</text>
</comment>
<comment type="similarity">
    <text evidence="5">Belongs to the catalase family.</text>
</comment>
<comment type="sequence caution" evidence="5">
    <conflict type="erroneous gene model prediction">
        <sequence resource="EMBL-CDS" id="AAF79625"/>
    </conflict>
</comment>
<comment type="sequence caution" evidence="5">
    <conflict type="erroneous gene model prediction">
        <sequence resource="EMBL-CDS" id="AAF80611"/>
    </conflict>
</comment>
<proteinExistence type="evidence at protein level"/>
<organism>
    <name type="scientific">Arabidopsis thaliana</name>
    <name type="common">Mouse-ear cress</name>
    <dbReference type="NCBI Taxonomy" id="3702"/>
    <lineage>
        <taxon>Eukaryota</taxon>
        <taxon>Viridiplantae</taxon>
        <taxon>Streptophyta</taxon>
        <taxon>Embryophyta</taxon>
        <taxon>Tracheophyta</taxon>
        <taxon>Spermatophyta</taxon>
        <taxon>Magnoliopsida</taxon>
        <taxon>eudicotyledons</taxon>
        <taxon>Gunneridae</taxon>
        <taxon>Pentapetalae</taxon>
        <taxon>rosids</taxon>
        <taxon>malvids</taxon>
        <taxon>Brassicales</taxon>
        <taxon>Brassicaceae</taxon>
        <taxon>Camelineae</taxon>
        <taxon>Arabidopsis</taxon>
    </lineage>
</organism>
<keyword id="KW-0025">Alternative splicing</keyword>
<keyword id="KW-0349">Heme</keyword>
<keyword id="KW-0376">Hydrogen peroxide</keyword>
<keyword id="KW-0408">Iron</keyword>
<keyword id="KW-0479">Metal-binding</keyword>
<keyword id="KW-0560">Oxidoreductase</keyword>
<keyword id="KW-0575">Peroxidase</keyword>
<keyword id="KW-0576">Peroxisome</keyword>
<keyword id="KW-1185">Reference proteome</keyword>